<evidence type="ECO:0000255" key="1">
    <source>
        <dbReference type="HAMAP-Rule" id="MF_00747"/>
    </source>
</evidence>
<sequence length="623" mass="72058">MFPQRLDSTVAYAIAKAMIDGFNRHYRLFRTESARAKHRFETADWHGQQRAQRERIEFYDLRVREASIRLEREFKAGEQPMDVWHQVKLHYIGLLVNHHQPELAETFFNSVTTKILHRSYFQNDFIFVRPAVSTEYIENQEPTAQPTYRAYYPTQGNMHETLVKLVEDFGLCREFEDLRRDAGYVAEAMAARLGDVKLRANFQIQVLSGLFFRNKGAYVVGKIINGFGEIPFALPILHRQPAPGQVLPADGKGISSQSDAGKLVIDAALFGEDDLLILFSFARAYFMVDMGIPSAFVQFLRSMMPRMPRAEIYNALGLAKQGKTLFYRDFLHHLRHSTDKFRIAPGIKGMVMLVFDLPSFPYVFKVIKDYYPPQKDTTREQIKGKYLLVKQHDRVGRMADTQEYSEVAFPRERFSDELIAEIEKFAPSQLEISDRDGDGQMEVIIKHVYIERRMIPLNIYLQEAFDFGVAEPAARDQIERAVVEYGNAIKDMVAANIFPGDMLWKNFGITRHGKVVFYDYDEIEYITDCKFRKVPTPRNEEDEMSGEVWYSVGPKDVFPETFGPFLLGNDAVREVFMKHHADLLDAAFWQRHQARIQAGHVYDVFPYDQQKRFAVMHGPARAG</sequence>
<gene>
    <name evidence="1" type="primary">aceK</name>
    <name type="ordered locus">Pnap_0457</name>
</gene>
<accession>A1VJF1</accession>
<name>ACEK_POLNA</name>
<feature type="chain" id="PRO_0000288291" description="Isocitrate dehydrogenase kinase/phosphatase">
    <location>
        <begin position="1"/>
        <end position="623"/>
    </location>
</feature>
<feature type="active site" evidence="1">
    <location>
        <position position="400"/>
    </location>
</feature>
<feature type="binding site" evidence="1">
    <location>
        <begin position="344"/>
        <end position="350"/>
    </location>
    <ligand>
        <name>ATP</name>
        <dbReference type="ChEBI" id="CHEBI:30616"/>
    </ligand>
</feature>
<feature type="binding site" evidence="1">
    <location>
        <position position="365"/>
    </location>
    <ligand>
        <name>ATP</name>
        <dbReference type="ChEBI" id="CHEBI:30616"/>
    </ligand>
</feature>
<protein>
    <recommendedName>
        <fullName evidence="1">Isocitrate dehydrogenase kinase/phosphatase</fullName>
        <shortName evidence="1">IDH kinase/phosphatase</shortName>
        <shortName evidence="1">IDHK/P</shortName>
        <ecNumber evidence="1">2.7.11.5</ecNumber>
        <ecNumber evidence="1">3.1.3.-</ecNumber>
    </recommendedName>
</protein>
<organism>
    <name type="scientific">Polaromonas naphthalenivorans (strain CJ2)</name>
    <dbReference type="NCBI Taxonomy" id="365044"/>
    <lineage>
        <taxon>Bacteria</taxon>
        <taxon>Pseudomonadati</taxon>
        <taxon>Pseudomonadota</taxon>
        <taxon>Betaproteobacteria</taxon>
        <taxon>Burkholderiales</taxon>
        <taxon>Comamonadaceae</taxon>
        <taxon>Polaromonas</taxon>
    </lineage>
</organism>
<reference key="1">
    <citation type="journal article" date="2009" name="Environ. Microbiol.">
        <title>The genome of Polaromonas naphthalenivorans strain CJ2, isolated from coal tar-contaminated sediment, reveals physiological and metabolic versatility and evolution through extensive horizontal gene transfer.</title>
        <authorList>
            <person name="Yagi J.M."/>
            <person name="Sims D."/>
            <person name="Brettin T."/>
            <person name="Bruce D."/>
            <person name="Madsen E.L."/>
        </authorList>
    </citation>
    <scope>NUCLEOTIDE SEQUENCE [LARGE SCALE GENOMIC DNA]</scope>
    <source>
        <strain>CJ2</strain>
    </source>
</reference>
<proteinExistence type="inferred from homology"/>
<comment type="function">
    <text evidence="1">Bifunctional enzyme which can phosphorylate or dephosphorylate isocitrate dehydrogenase (IDH) on a specific serine residue. This is a regulatory mechanism which enables bacteria to bypass the Krebs cycle via the glyoxylate shunt in response to the source of carbon. When bacteria are grown on glucose, IDH is fully active and unphosphorylated, but when grown on acetate or ethanol, the activity of IDH declines drastically concomitant with its phosphorylation.</text>
</comment>
<comment type="catalytic activity">
    <reaction evidence="1">
        <text>L-seryl-[isocitrate dehydrogenase] + ATP = O-phospho-L-seryl-[isocitrate dehydrogenase] + ADP + H(+)</text>
        <dbReference type="Rhea" id="RHEA:43540"/>
        <dbReference type="Rhea" id="RHEA-COMP:10605"/>
        <dbReference type="Rhea" id="RHEA-COMP:10606"/>
        <dbReference type="ChEBI" id="CHEBI:15378"/>
        <dbReference type="ChEBI" id="CHEBI:29999"/>
        <dbReference type="ChEBI" id="CHEBI:30616"/>
        <dbReference type="ChEBI" id="CHEBI:83421"/>
        <dbReference type="ChEBI" id="CHEBI:456216"/>
        <dbReference type="EC" id="2.7.11.5"/>
    </reaction>
</comment>
<comment type="subcellular location">
    <subcellularLocation>
        <location evidence="1">Cytoplasm</location>
    </subcellularLocation>
</comment>
<comment type="similarity">
    <text evidence="1">Belongs to the AceK family.</text>
</comment>
<dbReference type="EC" id="2.7.11.5" evidence="1"/>
<dbReference type="EC" id="3.1.3.-" evidence="1"/>
<dbReference type="EMBL" id="CP000529">
    <property type="protein sequence ID" value="ABM35779.1"/>
    <property type="molecule type" value="Genomic_DNA"/>
</dbReference>
<dbReference type="RefSeq" id="WP_011799879.1">
    <property type="nucleotide sequence ID" value="NC_008781.1"/>
</dbReference>
<dbReference type="SMR" id="A1VJF1"/>
<dbReference type="STRING" id="365044.Pnap_0457"/>
<dbReference type="KEGG" id="pna:Pnap_0457"/>
<dbReference type="eggNOG" id="COG4579">
    <property type="taxonomic scope" value="Bacteria"/>
</dbReference>
<dbReference type="HOGENOM" id="CLU_033804_1_1_4"/>
<dbReference type="OrthoDB" id="5287793at2"/>
<dbReference type="Proteomes" id="UP000000644">
    <property type="component" value="Chromosome"/>
</dbReference>
<dbReference type="GO" id="GO:0005737">
    <property type="term" value="C:cytoplasm"/>
    <property type="evidence" value="ECO:0007669"/>
    <property type="project" value="UniProtKB-SubCell"/>
</dbReference>
<dbReference type="GO" id="GO:0008772">
    <property type="term" value="F:[isocitrate dehydrogenase (NADP+)] kinase activity"/>
    <property type="evidence" value="ECO:0007669"/>
    <property type="project" value="UniProtKB-UniRule"/>
</dbReference>
<dbReference type="GO" id="GO:0005524">
    <property type="term" value="F:ATP binding"/>
    <property type="evidence" value="ECO:0007669"/>
    <property type="project" value="UniProtKB-UniRule"/>
</dbReference>
<dbReference type="GO" id="GO:0004721">
    <property type="term" value="F:phosphoprotein phosphatase activity"/>
    <property type="evidence" value="ECO:0007669"/>
    <property type="project" value="UniProtKB-KW"/>
</dbReference>
<dbReference type="GO" id="GO:0004674">
    <property type="term" value="F:protein serine/threonine kinase activity"/>
    <property type="evidence" value="ECO:0007669"/>
    <property type="project" value="UniProtKB-KW"/>
</dbReference>
<dbReference type="GO" id="GO:0006006">
    <property type="term" value="P:glucose metabolic process"/>
    <property type="evidence" value="ECO:0007669"/>
    <property type="project" value="InterPro"/>
</dbReference>
<dbReference type="GO" id="GO:0006097">
    <property type="term" value="P:glyoxylate cycle"/>
    <property type="evidence" value="ECO:0007669"/>
    <property type="project" value="UniProtKB-UniRule"/>
</dbReference>
<dbReference type="GO" id="GO:0006099">
    <property type="term" value="P:tricarboxylic acid cycle"/>
    <property type="evidence" value="ECO:0007669"/>
    <property type="project" value="UniProtKB-UniRule"/>
</dbReference>
<dbReference type="HAMAP" id="MF_00747">
    <property type="entry name" value="AceK"/>
    <property type="match status" value="1"/>
</dbReference>
<dbReference type="InterPro" id="IPR046855">
    <property type="entry name" value="AceK_kinase"/>
</dbReference>
<dbReference type="InterPro" id="IPR046854">
    <property type="entry name" value="AceK_regulatory"/>
</dbReference>
<dbReference type="InterPro" id="IPR010452">
    <property type="entry name" value="Isocitrate_DH_AceK"/>
</dbReference>
<dbReference type="NCBIfam" id="NF002804">
    <property type="entry name" value="PRK02946.1"/>
    <property type="match status" value="1"/>
</dbReference>
<dbReference type="PANTHER" id="PTHR39559">
    <property type="match status" value="1"/>
</dbReference>
<dbReference type="PANTHER" id="PTHR39559:SF1">
    <property type="entry name" value="ISOCITRATE DEHYDROGENASE KINASE_PHOSPHATASE"/>
    <property type="match status" value="1"/>
</dbReference>
<dbReference type="Pfam" id="PF06315">
    <property type="entry name" value="AceK_kinase"/>
    <property type="match status" value="1"/>
</dbReference>
<dbReference type="Pfam" id="PF20423">
    <property type="entry name" value="AceK_regulatory"/>
    <property type="match status" value="1"/>
</dbReference>
<dbReference type="PIRSF" id="PIRSF000719">
    <property type="entry name" value="AceK"/>
    <property type="match status" value="1"/>
</dbReference>
<keyword id="KW-0067">ATP-binding</keyword>
<keyword id="KW-0963">Cytoplasm</keyword>
<keyword id="KW-0329">Glyoxylate bypass</keyword>
<keyword id="KW-0378">Hydrolase</keyword>
<keyword id="KW-0418">Kinase</keyword>
<keyword id="KW-0547">Nucleotide-binding</keyword>
<keyword id="KW-0904">Protein phosphatase</keyword>
<keyword id="KW-1185">Reference proteome</keyword>
<keyword id="KW-0723">Serine/threonine-protein kinase</keyword>
<keyword id="KW-0808">Transferase</keyword>
<keyword id="KW-0816">Tricarboxylic acid cycle</keyword>